<accession>Q4PAR1</accession>
<accession>A0A0D1E0T9</accession>
<proteinExistence type="inferred from homology"/>
<name>NAR1_MYCMD</name>
<comment type="function">
    <text evidence="1">Component of the cytosolic Fe/S protein assembly machinery. Required for maturation of extramitochondrial Fe/S proteins. May play a role in the transfer of pre-assembled Fe/S clusters to target apoproteins (By similarity).</text>
</comment>
<comment type="similarity">
    <text evidence="4">Belongs to the NARF family.</text>
</comment>
<gene>
    <name type="primary">NAR1</name>
    <name type="ORF">UMAG_02802</name>
</gene>
<keyword id="KW-0004">4Fe-4S</keyword>
<keyword id="KW-0408">Iron</keyword>
<keyword id="KW-0411">Iron-sulfur</keyword>
<keyword id="KW-0479">Metal-binding</keyword>
<keyword id="KW-1185">Reference proteome</keyword>
<reference key="1">
    <citation type="journal article" date="2006" name="Nature">
        <title>Insights from the genome of the biotrophic fungal plant pathogen Ustilago maydis.</title>
        <authorList>
            <person name="Kaemper J."/>
            <person name="Kahmann R."/>
            <person name="Boelker M."/>
            <person name="Ma L.-J."/>
            <person name="Brefort T."/>
            <person name="Saville B.J."/>
            <person name="Banuett F."/>
            <person name="Kronstad J.W."/>
            <person name="Gold S.E."/>
            <person name="Mueller O."/>
            <person name="Perlin M.H."/>
            <person name="Woesten H.A.B."/>
            <person name="de Vries R."/>
            <person name="Ruiz-Herrera J."/>
            <person name="Reynaga-Pena C.G."/>
            <person name="Snetselaar K."/>
            <person name="McCann M."/>
            <person name="Perez-Martin J."/>
            <person name="Feldbruegge M."/>
            <person name="Basse C.W."/>
            <person name="Steinberg G."/>
            <person name="Ibeas J.I."/>
            <person name="Holloman W."/>
            <person name="Guzman P."/>
            <person name="Farman M.L."/>
            <person name="Stajich J.E."/>
            <person name="Sentandreu R."/>
            <person name="Gonzalez-Prieto J.M."/>
            <person name="Kennell J.C."/>
            <person name="Molina L."/>
            <person name="Schirawski J."/>
            <person name="Mendoza-Mendoza A."/>
            <person name="Greilinger D."/>
            <person name="Muench K."/>
            <person name="Roessel N."/>
            <person name="Scherer M."/>
            <person name="Vranes M."/>
            <person name="Ladendorf O."/>
            <person name="Vincon V."/>
            <person name="Fuchs U."/>
            <person name="Sandrock B."/>
            <person name="Meng S."/>
            <person name="Ho E.C.H."/>
            <person name="Cahill M.J."/>
            <person name="Boyce K.J."/>
            <person name="Klose J."/>
            <person name="Klosterman S.J."/>
            <person name="Deelstra H.J."/>
            <person name="Ortiz-Castellanos L."/>
            <person name="Li W."/>
            <person name="Sanchez-Alonso P."/>
            <person name="Schreier P.H."/>
            <person name="Haeuser-Hahn I."/>
            <person name="Vaupel M."/>
            <person name="Koopmann E."/>
            <person name="Friedrich G."/>
            <person name="Voss H."/>
            <person name="Schlueter T."/>
            <person name="Margolis J."/>
            <person name="Platt D."/>
            <person name="Swimmer C."/>
            <person name="Gnirke A."/>
            <person name="Chen F."/>
            <person name="Vysotskaia V."/>
            <person name="Mannhaupt G."/>
            <person name="Gueldener U."/>
            <person name="Muensterkoetter M."/>
            <person name="Haase D."/>
            <person name="Oesterheld M."/>
            <person name="Mewes H.-W."/>
            <person name="Mauceli E.W."/>
            <person name="DeCaprio D."/>
            <person name="Wade C.M."/>
            <person name="Butler J."/>
            <person name="Young S.K."/>
            <person name="Jaffe D.B."/>
            <person name="Calvo S.E."/>
            <person name="Nusbaum C."/>
            <person name="Galagan J.E."/>
            <person name="Birren B.W."/>
        </authorList>
    </citation>
    <scope>NUCLEOTIDE SEQUENCE [LARGE SCALE GENOMIC DNA]</scope>
    <source>
        <strain>DSM 14603 / FGSC 9021 / UM521</strain>
    </source>
</reference>
<reference key="2">
    <citation type="submission" date="2014-09" db="EMBL/GenBank/DDBJ databases">
        <authorList>
            <person name="Gueldener U."/>
            <person name="Muensterkoetter M."/>
            <person name="Walter M.C."/>
            <person name="Mannhaupt G."/>
            <person name="Kahmann R."/>
        </authorList>
    </citation>
    <scope>GENOME REANNOTATION</scope>
    <source>
        <strain>DSM 14603 / FGSC 9021 / UM521</strain>
    </source>
</reference>
<evidence type="ECO:0000250" key="1"/>
<evidence type="ECO:0000255" key="2"/>
<evidence type="ECO:0000256" key="3">
    <source>
        <dbReference type="SAM" id="MobiDB-lite"/>
    </source>
</evidence>
<evidence type="ECO:0000305" key="4"/>
<protein>
    <recommendedName>
        <fullName>Cytosolic Fe-S cluster assembly factor NAR1</fullName>
    </recommendedName>
    <alternativeName>
        <fullName>Nuclear architecture-related protein 1</fullName>
    </alternativeName>
</protein>
<organism>
    <name type="scientific">Mycosarcoma maydis</name>
    <name type="common">Corn smut fungus</name>
    <name type="synonym">Ustilago maydis</name>
    <dbReference type="NCBI Taxonomy" id="5270"/>
    <lineage>
        <taxon>Eukaryota</taxon>
        <taxon>Fungi</taxon>
        <taxon>Dikarya</taxon>
        <taxon>Basidiomycota</taxon>
        <taxon>Ustilaginomycotina</taxon>
        <taxon>Ustilaginomycetes</taxon>
        <taxon>Ustilaginales</taxon>
        <taxon>Ustilaginaceae</taxon>
        <taxon>Mycosarcoma</taxon>
    </lineage>
</organism>
<sequence length="827" mass="89536">MAFSGALTLTDLNDYLGPSQACIKPVQAADVPSQDHSDVSALAASASTHIAIDHDGAYYESSTPPSSSLSAADSRPRQRTKLETAQISLNDCLACSGCVTSAESVLITMQSQDEMRRAIAELNQSNANKLVVASISTQSLASLSAKYTFQHPQPSSSRSASTSTLPLRVLLHRISYFLKTVFGFDHVYDTTFARHIALKEHQREFFQRRENARKRAKLSNAPADDDDRLHPDQVDGPTLPMLASACPGWICYAEKTHGELLPYISTTKSPQQVAGVIAKRFLPERLGLLAPSAPDQPSIYHVTVMPCYDKKLEASRPDFYDDITGTKEVDCVLTTGELDKLMLDEAFDICTPVPGEQEAIQESIAELSLQQAFNTPNPDVGSASVSMMPRLPRLPQLLDQPGSSSGGYLFLLMRAVWLDWISVHWDSLPLSVREQGILPKLDVRVIRTTDFTEFVLRAPTQLVEPCNDDTSQSSILFRGAQCYGFRNLQNLVRKLQKQTGVRNTRGAAARLVDADGNAIGAAAARNRASSAKARARGRGGMMRRARAGAAAVVKSSPLNPDAEAVDVTQLQLSTAHEEDERGYDYVEVMACPSGCVNGGGQIRPPTQSDVDVTRSSTTVDNHATDPEGYTKGGWAADQAGDHDGLELMLNKTCSNKTSAVPDEADEEKEVRGWQGTSKEWVRRVEEAYWQDSSVAQTRVTVAAVNRAVDQGGANDSGSSTPTLVGSGANTPLSSSNAKSIRVEDHQRLLESLAVSNAERAQRTRVVKLGGDAMAYADVLAELVVNELCLLAAPAGDALALDSARDKLFRTQYRAVQDEAVNGLAVQW</sequence>
<dbReference type="EMBL" id="CM003145">
    <property type="protein sequence ID" value="KIS69471.1"/>
    <property type="molecule type" value="Genomic_DNA"/>
</dbReference>
<dbReference type="RefSeq" id="XP_011389150.1">
    <property type="nucleotide sequence ID" value="XM_011390848.1"/>
</dbReference>
<dbReference type="FunCoup" id="Q4PAR1">
    <property type="interactions" value="58"/>
</dbReference>
<dbReference type="STRING" id="237631.Q4PAR1"/>
<dbReference type="EnsemblFungi" id="KIS69471">
    <property type="protein sequence ID" value="KIS69471"/>
    <property type="gene ID" value="UMAG_02802"/>
</dbReference>
<dbReference type="GeneID" id="23563460"/>
<dbReference type="KEGG" id="uma:UMAG_02802"/>
<dbReference type="VEuPathDB" id="FungiDB:UMAG_02802"/>
<dbReference type="eggNOG" id="KOG2439">
    <property type="taxonomic scope" value="Eukaryota"/>
</dbReference>
<dbReference type="HOGENOM" id="CLU_018240_0_2_1"/>
<dbReference type="InParanoid" id="Q4PAR1"/>
<dbReference type="OMA" id="AVWLDWI"/>
<dbReference type="OrthoDB" id="10253113at2759"/>
<dbReference type="Proteomes" id="UP000000561">
    <property type="component" value="Chromosome 6"/>
</dbReference>
<dbReference type="GO" id="GO:0097361">
    <property type="term" value="C:cytosolic [4Fe-4S] assembly targeting complex"/>
    <property type="evidence" value="ECO:0000318"/>
    <property type="project" value="GO_Central"/>
</dbReference>
<dbReference type="GO" id="GO:0051539">
    <property type="term" value="F:4 iron, 4 sulfur cluster binding"/>
    <property type="evidence" value="ECO:0007669"/>
    <property type="project" value="UniProtKB-KW"/>
</dbReference>
<dbReference type="GO" id="GO:0051536">
    <property type="term" value="F:iron-sulfur cluster binding"/>
    <property type="evidence" value="ECO:0000250"/>
    <property type="project" value="UniProtKB"/>
</dbReference>
<dbReference type="GO" id="GO:0046872">
    <property type="term" value="F:metal ion binding"/>
    <property type="evidence" value="ECO:0007669"/>
    <property type="project" value="UniProtKB-KW"/>
</dbReference>
<dbReference type="GO" id="GO:0016226">
    <property type="term" value="P:iron-sulfur cluster assembly"/>
    <property type="evidence" value="ECO:0000250"/>
    <property type="project" value="UniProtKB"/>
</dbReference>
<dbReference type="FunFam" id="3.30.70.20:FF:000042">
    <property type="entry name" value="Cytosolic Fe-S cluster assembly factor NAR1"/>
    <property type="match status" value="1"/>
</dbReference>
<dbReference type="Gene3D" id="3.40.50.1780">
    <property type="match status" value="1"/>
</dbReference>
<dbReference type="Gene3D" id="3.40.950.10">
    <property type="entry name" value="Fe-only Hydrogenase (Larger Subunit), Chain L, domain 3"/>
    <property type="match status" value="1"/>
</dbReference>
<dbReference type="InterPro" id="IPR050340">
    <property type="entry name" value="Cytosolic_Fe-S_CAF"/>
</dbReference>
<dbReference type="InterPro" id="IPR009016">
    <property type="entry name" value="Fe_hydrogenase"/>
</dbReference>
<dbReference type="InterPro" id="IPR004108">
    <property type="entry name" value="Fe_hydrogenase_lsu_C"/>
</dbReference>
<dbReference type="PANTHER" id="PTHR11615">
    <property type="entry name" value="NITRATE, FORMATE, IRON DEHYDROGENASE"/>
    <property type="match status" value="1"/>
</dbReference>
<dbReference type="Pfam" id="PF02906">
    <property type="entry name" value="Fe_hyd_lg_C"/>
    <property type="match status" value="1"/>
</dbReference>
<dbReference type="SUPFAM" id="SSF53920">
    <property type="entry name" value="Fe-only hydrogenase"/>
    <property type="match status" value="1"/>
</dbReference>
<feature type="chain" id="PRO_0000383740" description="Cytosolic Fe-S cluster assembly factor NAR1">
    <location>
        <begin position="1"/>
        <end position="827"/>
    </location>
</feature>
<feature type="region of interest" description="Disordered" evidence="3">
    <location>
        <begin position="57"/>
        <end position="77"/>
    </location>
</feature>
<feature type="region of interest" description="Disordered" evidence="3">
    <location>
        <begin position="209"/>
        <end position="231"/>
    </location>
</feature>
<feature type="region of interest" description="Disordered" evidence="3">
    <location>
        <begin position="599"/>
        <end position="637"/>
    </location>
</feature>
<feature type="region of interest" description="Disordered" evidence="3">
    <location>
        <begin position="709"/>
        <end position="739"/>
    </location>
</feature>
<feature type="compositionally biased region" description="Low complexity" evidence="3">
    <location>
        <begin position="61"/>
        <end position="73"/>
    </location>
</feature>
<feature type="compositionally biased region" description="Polar residues" evidence="3">
    <location>
        <begin position="604"/>
        <end position="621"/>
    </location>
</feature>
<feature type="compositionally biased region" description="Polar residues" evidence="3">
    <location>
        <begin position="713"/>
        <end position="738"/>
    </location>
</feature>
<feature type="binding site" evidence="2">
    <location>
        <position position="22"/>
    </location>
    <ligand>
        <name>[4Fe-4S] cluster</name>
        <dbReference type="ChEBI" id="CHEBI:49883"/>
        <label>1</label>
    </ligand>
</feature>
<feature type="binding site" evidence="2">
    <location>
        <position position="92"/>
    </location>
    <ligand>
        <name>[4Fe-4S] cluster</name>
        <dbReference type="ChEBI" id="CHEBI:49883"/>
        <label>1</label>
    </ligand>
</feature>
<feature type="binding site" evidence="2">
    <location>
        <position position="95"/>
    </location>
    <ligand>
        <name>[4Fe-4S] cluster</name>
        <dbReference type="ChEBI" id="CHEBI:49883"/>
        <label>1</label>
    </ligand>
</feature>
<feature type="binding site" evidence="2">
    <location>
        <position position="98"/>
    </location>
    <ligand>
        <name>[4Fe-4S] cluster</name>
        <dbReference type="ChEBI" id="CHEBI:49883"/>
        <label>1</label>
    </ligand>
</feature>
<feature type="binding site" evidence="2">
    <location>
        <position position="246"/>
    </location>
    <ligand>
        <name>[4Fe-4S] cluster</name>
        <dbReference type="ChEBI" id="CHEBI:49883"/>
        <label>2</label>
    </ligand>
</feature>
<feature type="binding site" evidence="2">
    <location>
        <position position="307"/>
    </location>
    <ligand>
        <name>[4Fe-4S] cluster</name>
        <dbReference type="ChEBI" id="CHEBI:49883"/>
        <label>2</label>
    </ligand>
</feature>
<feature type="binding site" evidence="2">
    <location>
        <position position="591"/>
    </location>
    <ligand>
        <name>[4Fe-4S] cluster</name>
        <dbReference type="ChEBI" id="CHEBI:49883"/>
        <label>2</label>
    </ligand>
</feature>
<feature type="binding site" evidence="2">
    <location>
        <position position="595"/>
    </location>
    <ligand>
        <name>[4Fe-4S] cluster</name>
        <dbReference type="ChEBI" id="CHEBI:49883"/>
        <label>2</label>
    </ligand>
</feature>